<accession>Q5N1Y6</accession>
<feature type="chain" id="PRO_0000100497" description="Phosphoribosylformylglycinamidine synthase subunit PurL">
    <location>
        <begin position="1"/>
        <end position="777"/>
    </location>
</feature>
<feature type="active site" evidence="1">
    <location>
        <position position="50"/>
    </location>
</feature>
<feature type="active site" description="Proton acceptor" evidence="1">
    <location>
        <position position="96"/>
    </location>
</feature>
<feature type="binding site" evidence="1">
    <location>
        <position position="53"/>
    </location>
    <ligand>
        <name>ATP</name>
        <dbReference type="ChEBI" id="CHEBI:30616"/>
    </ligand>
</feature>
<feature type="binding site" evidence="1">
    <location>
        <position position="92"/>
    </location>
    <ligand>
        <name>ATP</name>
        <dbReference type="ChEBI" id="CHEBI:30616"/>
    </ligand>
</feature>
<feature type="binding site" evidence="1">
    <location>
        <position position="94"/>
    </location>
    <ligand>
        <name>Mg(2+)</name>
        <dbReference type="ChEBI" id="CHEBI:18420"/>
        <label>1</label>
    </ligand>
</feature>
<feature type="binding site" evidence="1">
    <location>
        <begin position="95"/>
        <end position="98"/>
    </location>
    <ligand>
        <name>substrate</name>
    </ligand>
</feature>
<feature type="binding site" evidence="1">
    <location>
        <position position="117"/>
    </location>
    <ligand>
        <name>substrate</name>
    </ligand>
</feature>
<feature type="binding site" evidence="1">
    <location>
        <position position="118"/>
    </location>
    <ligand>
        <name>Mg(2+)</name>
        <dbReference type="ChEBI" id="CHEBI:18420"/>
        <label>2</label>
    </ligand>
</feature>
<feature type="binding site" evidence="1">
    <location>
        <position position="241"/>
    </location>
    <ligand>
        <name>substrate</name>
    </ligand>
</feature>
<feature type="binding site" evidence="1">
    <location>
        <position position="269"/>
    </location>
    <ligand>
        <name>Mg(2+)</name>
        <dbReference type="ChEBI" id="CHEBI:18420"/>
        <label>2</label>
    </ligand>
</feature>
<feature type="binding site" evidence="1">
    <location>
        <begin position="313"/>
        <end position="315"/>
    </location>
    <ligand>
        <name>substrate</name>
    </ligand>
</feature>
<feature type="binding site" evidence="1">
    <location>
        <position position="516"/>
    </location>
    <ligand>
        <name>ATP</name>
        <dbReference type="ChEBI" id="CHEBI:30616"/>
    </ligand>
</feature>
<feature type="binding site" evidence="1">
    <location>
        <position position="553"/>
    </location>
    <ligand>
        <name>ATP</name>
        <dbReference type="ChEBI" id="CHEBI:30616"/>
    </ligand>
</feature>
<feature type="binding site" evidence="1">
    <location>
        <position position="554"/>
    </location>
    <ligand>
        <name>Mg(2+)</name>
        <dbReference type="ChEBI" id="CHEBI:18420"/>
        <label>1</label>
    </ligand>
</feature>
<feature type="binding site" evidence="1">
    <location>
        <position position="556"/>
    </location>
    <ligand>
        <name>substrate</name>
    </ligand>
</feature>
<gene>
    <name evidence="1" type="primary">purL</name>
    <name type="ordered locus">syc1494_c</name>
</gene>
<sequence>MTAISSAPFSADEIAGEGIKPEEYDAIVERLGRHPNKAELGMFGVMWSEHCCYKNSRPLLSQFPTEGLRILVGPGENAGVVDLGDGLHLAFKVESHNHPSAVEPFQGAATGVGGILRDIFTMGARPIAILNSLRFGDLEQPRTRRLFHGVVSGISHYGNCVGVPTVGGEVAFDPAYNGNPLVNAMALGLMETDEIVKAGASGIGNPVLYVGSTTGRDGMGGASFASAELSDESLDDRPAVQVGDPFLEKSLIEACLEAFKTGAVVAAQDMGAAGLTCSTAEMAAKGGVGVELDLDLIPVRESGMVPYEYLLSESQERMLFVAAAGREQELIDIFHRWGLQAVVAGKIIAEPIVRIFWQGAIAAEIPATALSDNTPIYHRQLPDEPPAYAQQAWQWTIDQLPAATEVGCGDRSWNDLLLTLLDSPTIASKRWVYRQYDHQVQNNTVVLPGAADAAVVRLRPQMGAAALKTSNKGVAATTDCNARYCYLQPYEGAKAAVAEAARNLSCVGAEPLAVTDNLNFGSPEKPIGYWQLAEACRGLSEACREFSTPVTGGNVSLYNETLDSDGKPQPIYPTPVVGMVGLVPNLDRVCGQGFQSVGDRLYLLGLPTQAADDRLSLGGSEYLAIAHQTVAGLPPRIDFDLERRVQAVCRLGIHQGWIRSAHDSAEGGLAVAIAESAIAGSLGARVNLGELVGHRPDWLLFAEGGARILVSVDPAHVAVWEAELQAQIPAAWQAIGTVTEADAGLAIAAGNQPLVQLSVDQLQQTWGGAIERRLAKD</sequence>
<comment type="function">
    <text evidence="1">Part of the phosphoribosylformylglycinamidine synthase complex involved in the purines biosynthetic pathway. Catalyzes the ATP-dependent conversion of formylglycinamide ribonucleotide (FGAR) and glutamine to yield formylglycinamidine ribonucleotide (FGAM) and glutamate. The FGAM synthase complex is composed of three subunits. PurQ produces an ammonia molecule by converting glutamine to glutamate. PurL transfers the ammonia molecule to FGAR to form FGAM in an ATP-dependent manner. PurS interacts with PurQ and PurL and is thought to assist in the transfer of the ammonia molecule from PurQ to PurL.</text>
</comment>
<comment type="catalytic activity">
    <reaction evidence="1">
        <text>N(2)-formyl-N(1)-(5-phospho-beta-D-ribosyl)glycinamide + L-glutamine + ATP + H2O = 2-formamido-N(1)-(5-O-phospho-beta-D-ribosyl)acetamidine + L-glutamate + ADP + phosphate + H(+)</text>
        <dbReference type="Rhea" id="RHEA:17129"/>
        <dbReference type="ChEBI" id="CHEBI:15377"/>
        <dbReference type="ChEBI" id="CHEBI:15378"/>
        <dbReference type="ChEBI" id="CHEBI:29985"/>
        <dbReference type="ChEBI" id="CHEBI:30616"/>
        <dbReference type="ChEBI" id="CHEBI:43474"/>
        <dbReference type="ChEBI" id="CHEBI:58359"/>
        <dbReference type="ChEBI" id="CHEBI:147286"/>
        <dbReference type="ChEBI" id="CHEBI:147287"/>
        <dbReference type="ChEBI" id="CHEBI:456216"/>
        <dbReference type="EC" id="6.3.5.3"/>
    </reaction>
</comment>
<comment type="pathway">
    <text evidence="1">Purine metabolism; IMP biosynthesis via de novo pathway; 5-amino-1-(5-phospho-D-ribosyl)imidazole from N(2)-formyl-N(1)-(5-phospho-D-ribosyl)glycinamide: step 1/2.</text>
</comment>
<comment type="subunit">
    <text evidence="1">Monomer. Part of the FGAM synthase complex composed of 1 PurL, 1 PurQ and 2 PurS subunits.</text>
</comment>
<comment type="subcellular location">
    <subcellularLocation>
        <location evidence="1">Cytoplasm</location>
    </subcellularLocation>
</comment>
<comment type="similarity">
    <text evidence="1">Belongs to the FGAMS family.</text>
</comment>
<proteinExistence type="inferred from homology"/>
<dbReference type="EC" id="6.3.5.3" evidence="1"/>
<dbReference type="EMBL" id="AP008231">
    <property type="protein sequence ID" value="BAD79684.1"/>
    <property type="molecule type" value="Genomic_DNA"/>
</dbReference>
<dbReference type="RefSeq" id="WP_011243804.1">
    <property type="nucleotide sequence ID" value="NZ_CP085785.1"/>
</dbReference>
<dbReference type="SMR" id="Q5N1Y6"/>
<dbReference type="GeneID" id="72428811"/>
<dbReference type="KEGG" id="syc:syc1494_c"/>
<dbReference type="eggNOG" id="COG0046">
    <property type="taxonomic scope" value="Bacteria"/>
</dbReference>
<dbReference type="UniPathway" id="UPA00074">
    <property type="reaction ID" value="UER00128"/>
</dbReference>
<dbReference type="Proteomes" id="UP000001175">
    <property type="component" value="Chromosome"/>
</dbReference>
<dbReference type="GO" id="GO:0005737">
    <property type="term" value="C:cytoplasm"/>
    <property type="evidence" value="ECO:0007669"/>
    <property type="project" value="UniProtKB-SubCell"/>
</dbReference>
<dbReference type="GO" id="GO:0005524">
    <property type="term" value="F:ATP binding"/>
    <property type="evidence" value="ECO:0007669"/>
    <property type="project" value="UniProtKB-UniRule"/>
</dbReference>
<dbReference type="GO" id="GO:0000287">
    <property type="term" value="F:magnesium ion binding"/>
    <property type="evidence" value="ECO:0007669"/>
    <property type="project" value="UniProtKB-UniRule"/>
</dbReference>
<dbReference type="GO" id="GO:0004642">
    <property type="term" value="F:phosphoribosylformylglycinamidine synthase activity"/>
    <property type="evidence" value="ECO:0007669"/>
    <property type="project" value="UniProtKB-UniRule"/>
</dbReference>
<dbReference type="GO" id="GO:0006189">
    <property type="term" value="P:'de novo' IMP biosynthetic process"/>
    <property type="evidence" value="ECO:0007669"/>
    <property type="project" value="UniProtKB-UniRule"/>
</dbReference>
<dbReference type="CDD" id="cd02203">
    <property type="entry name" value="PurL_repeat1"/>
    <property type="match status" value="1"/>
</dbReference>
<dbReference type="CDD" id="cd02204">
    <property type="entry name" value="PurL_repeat2"/>
    <property type="match status" value="1"/>
</dbReference>
<dbReference type="FunFam" id="3.30.1330.10:FF:000004">
    <property type="entry name" value="Phosphoribosylformylglycinamidine synthase subunit PurL"/>
    <property type="match status" value="1"/>
</dbReference>
<dbReference type="Gene3D" id="3.90.650.10">
    <property type="entry name" value="PurM-like C-terminal domain"/>
    <property type="match status" value="2"/>
</dbReference>
<dbReference type="Gene3D" id="3.30.1330.10">
    <property type="entry name" value="PurM-like, N-terminal domain"/>
    <property type="match status" value="2"/>
</dbReference>
<dbReference type="HAMAP" id="MF_00420">
    <property type="entry name" value="PurL_2"/>
    <property type="match status" value="1"/>
</dbReference>
<dbReference type="InterPro" id="IPR010074">
    <property type="entry name" value="PRibForGlyAmidine_synth_PurL"/>
</dbReference>
<dbReference type="InterPro" id="IPR041609">
    <property type="entry name" value="PurL_linker"/>
</dbReference>
<dbReference type="InterPro" id="IPR010918">
    <property type="entry name" value="PurM-like_C_dom"/>
</dbReference>
<dbReference type="InterPro" id="IPR036676">
    <property type="entry name" value="PurM-like_C_sf"/>
</dbReference>
<dbReference type="InterPro" id="IPR016188">
    <property type="entry name" value="PurM-like_N"/>
</dbReference>
<dbReference type="InterPro" id="IPR036921">
    <property type="entry name" value="PurM-like_N_sf"/>
</dbReference>
<dbReference type="NCBIfam" id="TIGR01736">
    <property type="entry name" value="FGAM_synth_II"/>
    <property type="match status" value="1"/>
</dbReference>
<dbReference type="NCBIfam" id="NF002290">
    <property type="entry name" value="PRK01213.1"/>
    <property type="match status" value="1"/>
</dbReference>
<dbReference type="PANTHER" id="PTHR43555">
    <property type="entry name" value="PHOSPHORIBOSYLFORMYLGLYCINAMIDINE SYNTHASE SUBUNIT PURL"/>
    <property type="match status" value="1"/>
</dbReference>
<dbReference type="PANTHER" id="PTHR43555:SF1">
    <property type="entry name" value="PHOSPHORIBOSYLFORMYLGLYCINAMIDINE SYNTHASE SUBUNIT PURL"/>
    <property type="match status" value="1"/>
</dbReference>
<dbReference type="Pfam" id="PF00586">
    <property type="entry name" value="AIRS"/>
    <property type="match status" value="2"/>
</dbReference>
<dbReference type="Pfam" id="PF02769">
    <property type="entry name" value="AIRS_C"/>
    <property type="match status" value="2"/>
</dbReference>
<dbReference type="Pfam" id="PF18072">
    <property type="entry name" value="FGAR-AT_linker"/>
    <property type="match status" value="1"/>
</dbReference>
<dbReference type="PIRSF" id="PIRSF001587">
    <property type="entry name" value="FGAM_synthase_II"/>
    <property type="match status" value="1"/>
</dbReference>
<dbReference type="SUPFAM" id="SSF56042">
    <property type="entry name" value="PurM C-terminal domain-like"/>
    <property type="match status" value="2"/>
</dbReference>
<dbReference type="SUPFAM" id="SSF55326">
    <property type="entry name" value="PurM N-terminal domain-like"/>
    <property type="match status" value="2"/>
</dbReference>
<organism>
    <name type="scientific">Synechococcus sp. (strain ATCC 27144 / PCC 6301 / SAUG 1402/1)</name>
    <name type="common">Anacystis nidulans</name>
    <dbReference type="NCBI Taxonomy" id="269084"/>
    <lineage>
        <taxon>Bacteria</taxon>
        <taxon>Bacillati</taxon>
        <taxon>Cyanobacteriota</taxon>
        <taxon>Cyanophyceae</taxon>
        <taxon>Synechococcales</taxon>
        <taxon>Synechococcaceae</taxon>
        <taxon>Synechococcus</taxon>
    </lineage>
</organism>
<protein>
    <recommendedName>
        <fullName evidence="1">Phosphoribosylformylglycinamidine synthase subunit PurL</fullName>
        <shortName evidence="1">FGAM synthase</shortName>
        <ecNumber evidence="1">6.3.5.3</ecNumber>
    </recommendedName>
    <alternativeName>
        <fullName evidence="1">Formylglycinamide ribonucleotide amidotransferase subunit II</fullName>
        <shortName evidence="1">FGAR amidotransferase II</shortName>
        <shortName evidence="1">FGAR-AT II</shortName>
    </alternativeName>
    <alternativeName>
        <fullName evidence="1">Glutamine amidotransferase PurL</fullName>
    </alternativeName>
    <alternativeName>
        <fullName evidence="1">Phosphoribosylformylglycinamidine synthase subunit II</fullName>
    </alternativeName>
</protein>
<reference key="1">
    <citation type="journal article" date="2007" name="Photosyn. Res.">
        <title>Complete nucleotide sequence of the freshwater unicellular cyanobacterium Synechococcus elongatus PCC 6301 chromosome: gene content and organization.</title>
        <authorList>
            <person name="Sugita C."/>
            <person name="Ogata K."/>
            <person name="Shikata M."/>
            <person name="Jikuya H."/>
            <person name="Takano J."/>
            <person name="Furumichi M."/>
            <person name="Kanehisa M."/>
            <person name="Omata T."/>
            <person name="Sugiura M."/>
            <person name="Sugita M."/>
        </authorList>
    </citation>
    <scope>NUCLEOTIDE SEQUENCE [LARGE SCALE GENOMIC DNA]</scope>
    <source>
        <strain>ATCC 27144 / PCC 6301 / SAUG 1402/1</strain>
    </source>
</reference>
<keyword id="KW-0067">ATP-binding</keyword>
<keyword id="KW-0963">Cytoplasm</keyword>
<keyword id="KW-0436">Ligase</keyword>
<keyword id="KW-0460">Magnesium</keyword>
<keyword id="KW-0479">Metal-binding</keyword>
<keyword id="KW-0547">Nucleotide-binding</keyword>
<keyword id="KW-0658">Purine biosynthesis</keyword>
<name>PURL_SYNP6</name>
<evidence type="ECO:0000255" key="1">
    <source>
        <dbReference type="HAMAP-Rule" id="MF_00420"/>
    </source>
</evidence>